<reference key="1">
    <citation type="journal article" date="2009" name="BMC Evol. Biol.">
        <title>A proteomic approach for studying insect phylogeny: CAPA peptides of ancient insect taxa (Dictyoptera, Blattoptera) as a test case.</title>
        <authorList>
            <person name="Roth S."/>
            <person name="Fromm B."/>
            <person name="Gaede G."/>
            <person name="Predel R."/>
        </authorList>
    </citation>
    <scope>PROTEIN SEQUENCE</scope>
    <scope>AMIDATION AT LEU-17</scope>
    <source>
        <tissue>Abdominal perisympathetic organs</tissue>
    </source>
</reference>
<reference evidence="5" key="2">
    <citation type="submission" date="2005-09" db="UniProtKB">
        <authorList>
            <person name="Predel R."/>
        </authorList>
    </citation>
    <scope>PROTEIN SEQUENCE</scope>
    <scope>TISSUE SPECIFICITY</scope>
    <scope>MASS SPECTROMETRY</scope>
    <scope>AMIDATION AT LEU-17</scope>
    <source>
        <tissue>Abdominal perisympathetic organs</tissue>
    </source>
</reference>
<dbReference type="GO" id="GO:0005576">
    <property type="term" value="C:extracellular region"/>
    <property type="evidence" value="ECO:0007669"/>
    <property type="project" value="UniProtKB-SubCell"/>
</dbReference>
<dbReference type="GO" id="GO:0005184">
    <property type="term" value="F:neuropeptide hormone activity"/>
    <property type="evidence" value="ECO:0007669"/>
    <property type="project" value="InterPro"/>
</dbReference>
<dbReference type="GO" id="GO:0007218">
    <property type="term" value="P:neuropeptide signaling pathway"/>
    <property type="evidence" value="ECO:0007669"/>
    <property type="project" value="UniProtKB-KW"/>
</dbReference>
<dbReference type="InterPro" id="IPR001484">
    <property type="entry name" value="Pyrokinin_CS"/>
</dbReference>
<dbReference type="PROSITE" id="PS00539">
    <property type="entry name" value="PYROKININ"/>
    <property type="match status" value="1"/>
</dbReference>
<organism>
    <name type="scientific">Rhyparobia maderae</name>
    <name type="common">Madeira cockroach</name>
    <name type="synonym">Leucophaea maderae</name>
    <dbReference type="NCBI Taxonomy" id="36963"/>
    <lineage>
        <taxon>Eukaryota</taxon>
        <taxon>Metazoa</taxon>
        <taxon>Ecdysozoa</taxon>
        <taxon>Arthropoda</taxon>
        <taxon>Hexapoda</taxon>
        <taxon>Insecta</taxon>
        <taxon>Pterygota</taxon>
        <taxon>Neoptera</taxon>
        <taxon>Polyneoptera</taxon>
        <taxon>Dictyoptera</taxon>
        <taxon>Blattodea</taxon>
        <taxon>Blaberoidea</taxon>
        <taxon>Blaberidae</taxon>
        <taxon>Oxyhaloinae</taxon>
        <taxon>Rhyparobia</taxon>
    </lineage>
</organism>
<keyword id="KW-0027">Amidation</keyword>
<keyword id="KW-0903">Direct protein sequencing</keyword>
<keyword id="KW-0527">Neuropeptide</keyword>
<keyword id="KW-0964">Secreted</keyword>
<proteinExistence type="evidence at protein level"/>
<evidence type="ECO:0000250" key="1">
    <source>
        <dbReference type="UniProtKB" id="P84594"/>
    </source>
</evidence>
<evidence type="ECO:0000255" key="2"/>
<evidence type="ECO:0000269" key="3">
    <source>
    </source>
</evidence>
<evidence type="ECO:0000269" key="4">
    <source ref="2"/>
</evidence>
<evidence type="ECO:0000305" key="5"/>
<feature type="peptide" id="PRO_0000044347" description="Pyrokinin-5">
    <location>
        <begin position="1"/>
        <end position="17"/>
    </location>
</feature>
<feature type="modified residue" description="Leucine amide" evidence="3 4">
    <location>
        <position position="17"/>
    </location>
</feature>
<sequence length="17" mass="1900">FGETSGETKGMWFGPRL</sequence>
<comment type="function">
    <text evidence="1">Myoactive.</text>
</comment>
<comment type="subcellular location">
    <subcellularLocation>
        <location evidence="5">Secreted</location>
    </subcellularLocation>
</comment>
<comment type="tissue specificity">
    <text evidence="4">Expressed in abdominal perisympathetic organs and abdominal ganglia.</text>
</comment>
<comment type="mass spectrometry" mass="1898.9" method="MALDI" evidence="4">
    <text>With amidation.</text>
</comment>
<comment type="similarity">
    <text evidence="2">Belongs to the pyrokinin family.</text>
</comment>
<name>PPK5_RHYMA</name>
<accession>P84664</accession>
<accession>P85769</accession>
<protein>
    <recommendedName>
        <fullName>Pyrokinin-5</fullName>
        <shortName>Leuma-PK-5</shortName>
    </recommendedName>
    <alternativeName>
        <fullName>FXPRL-amide</fullName>
    </alternativeName>
    <alternativeName>
        <fullName>RhyMa-Capa-PK</fullName>
    </alternativeName>
</protein>